<dbReference type="EMBL" id="AK095193">
    <property type="protein sequence ID" value="BAC04496.1"/>
    <property type="molecule type" value="mRNA"/>
</dbReference>
<dbReference type="EMBL" id="BC045621">
    <property type="protein sequence ID" value="AAH45621.1"/>
    <property type="molecule type" value="mRNA"/>
</dbReference>
<dbReference type="CCDS" id="CCDS73355.1">
    <molecule id="Q8N9B4-2"/>
</dbReference>
<dbReference type="CCDS" id="CCDS8265.1">
    <molecule id="Q8N9B4-1"/>
</dbReference>
<dbReference type="RefSeq" id="NP_001287901.1">
    <property type="nucleotide sequence ID" value="NM_001300972.1"/>
</dbReference>
<dbReference type="RefSeq" id="NP_001287902.1">
    <property type="nucleotide sequence ID" value="NM_001300973.1"/>
</dbReference>
<dbReference type="RefSeq" id="NP_001287904.1">
    <property type="nucleotide sequence ID" value="NM_001300975.1"/>
</dbReference>
<dbReference type="RefSeq" id="NP_001287905.1">
    <property type="nucleotide sequence ID" value="NM_001300976.1"/>
</dbReference>
<dbReference type="RefSeq" id="NP_001287906.1">
    <molecule id="Q8N9B4-2"/>
    <property type="nucleotide sequence ID" value="NM_001300977.2"/>
</dbReference>
<dbReference type="RefSeq" id="NP_872409.2">
    <molecule id="Q8N9B4-1"/>
    <property type="nucleotide sequence ID" value="NM_182603.4"/>
</dbReference>
<dbReference type="SMR" id="Q8N9B4"/>
<dbReference type="BioGRID" id="130783">
    <property type="interactions" value="5"/>
</dbReference>
<dbReference type="FunCoup" id="Q8N9B4">
    <property type="interactions" value="1453"/>
</dbReference>
<dbReference type="IntAct" id="Q8N9B4">
    <property type="interactions" value="2"/>
</dbReference>
<dbReference type="MINT" id="Q8N9B4"/>
<dbReference type="STRING" id="9606.ENSP00000435790"/>
<dbReference type="iPTMnet" id="Q8N9B4"/>
<dbReference type="PhosphoSitePlus" id="Q8N9B4"/>
<dbReference type="BioMuta" id="ANKRD42"/>
<dbReference type="DMDM" id="116241248"/>
<dbReference type="jPOST" id="Q8N9B4"/>
<dbReference type="MassIVE" id="Q8N9B4"/>
<dbReference type="PaxDb" id="9606-ENSP00000377051"/>
<dbReference type="PeptideAtlas" id="Q8N9B4"/>
<dbReference type="ProteomicsDB" id="72516">
    <molecule id="Q8N9B4-1"/>
</dbReference>
<dbReference type="ProteomicsDB" id="72517">
    <molecule id="Q8N9B4-2"/>
</dbReference>
<dbReference type="Antibodypedia" id="17554">
    <property type="antibodies" value="88 antibodies from 19 providers"/>
</dbReference>
<dbReference type="DNASU" id="338699"/>
<dbReference type="Ensembl" id="ENST00000393389.7">
    <molecule id="Q8N9B4-2"/>
    <property type="protein sequence ID" value="ENSP00000377049.3"/>
    <property type="gene ID" value="ENSG00000137494.14"/>
</dbReference>
<dbReference type="Ensembl" id="ENST00000393392.6">
    <molecule id="Q8N9B4-1"/>
    <property type="protein sequence ID" value="ENSP00000377051.2"/>
    <property type="gene ID" value="ENSG00000137494.14"/>
</dbReference>
<dbReference type="GeneID" id="338699"/>
<dbReference type="KEGG" id="hsa:338699"/>
<dbReference type="UCSC" id="uc001ozz.2">
    <molecule id="Q8N9B4-1"/>
    <property type="organism name" value="human"/>
</dbReference>
<dbReference type="AGR" id="HGNC:26752"/>
<dbReference type="CTD" id="338699"/>
<dbReference type="DisGeNET" id="338699"/>
<dbReference type="GeneCards" id="ANKRD42"/>
<dbReference type="HGNC" id="HGNC:26752">
    <property type="gene designation" value="ANKRD42"/>
</dbReference>
<dbReference type="HPA" id="ENSG00000137494">
    <property type="expression patterns" value="Tissue enhanced (testis)"/>
</dbReference>
<dbReference type="MIM" id="619778">
    <property type="type" value="gene"/>
</dbReference>
<dbReference type="neXtProt" id="NX_Q8N9B4"/>
<dbReference type="OpenTargets" id="ENSG00000137494"/>
<dbReference type="PharmGKB" id="PA142672609"/>
<dbReference type="VEuPathDB" id="HostDB:ENSG00000137494"/>
<dbReference type="eggNOG" id="KOG0504">
    <property type="taxonomic scope" value="Eukaryota"/>
</dbReference>
<dbReference type="eggNOG" id="KOG4412">
    <property type="taxonomic scope" value="Eukaryota"/>
</dbReference>
<dbReference type="GeneTree" id="ENSGT00940000154216"/>
<dbReference type="InParanoid" id="Q8N9B4"/>
<dbReference type="OrthoDB" id="163438at2759"/>
<dbReference type="PAN-GO" id="Q8N9B4">
    <property type="GO annotations" value="3 GO annotations based on evolutionary models"/>
</dbReference>
<dbReference type="PhylomeDB" id="Q8N9B4"/>
<dbReference type="TreeFam" id="TF354335"/>
<dbReference type="PathwayCommons" id="Q8N9B4"/>
<dbReference type="SignaLink" id="Q8N9B4"/>
<dbReference type="BioGRID-ORCS" id="338699">
    <property type="hits" value="38 hits in 1153 CRISPR screens"/>
</dbReference>
<dbReference type="ChiTaRS" id="ANKRD42">
    <property type="organism name" value="human"/>
</dbReference>
<dbReference type="GenomeRNAi" id="338699"/>
<dbReference type="Pharos" id="Q8N9B4">
    <property type="development level" value="Tbio"/>
</dbReference>
<dbReference type="PRO" id="PR:Q8N9B4"/>
<dbReference type="Proteomes" id="UP000005640">
    <property type="component" value="Chromosome 11"/>
</dbReference>
<dbReference type="RNAct" id="Q8N9B4">
    <property type="molecule type" value="protein"/>
</dbReference>
<dbReference type="Bgee" id="ENSG00000137494">
    <property type="expression patterns" value="Expressed in thymus and 102 other cell types or tissues"/>
</dbReference>
<dbReference type="ExpressionAtlas" id="Q8N9B4">
    <property type="expression patterns" value="baseline and differential"/>
</dbReference>
<dbReference type="GO" id="GO:0005634">
    <property type="term" value="C:nucleus"/>
    <property type="evidence" value="ECO:0000318"/>
    <property type="project" value="GO_Central"/>
</dbReference>
<dbReference type="GO" id="GO:0004861">
    <property type="term" value="F:cyclin-dependent protein serine/threonine kinase inhibitor activity"/>
    <property type="evidence" value="ECO:0000318"/>
    <property type="project" value="GO_Central"/>
</dbReference>
<dbReference type="GO" id="GO:0051059">
    <property type="term" value="F:NF-kappaB binding"/>
    <property type="evidence" value="ECO:0000318"/>
    <property type="project" value="GO_Central"/>
</dbReference>
<dbReference type="FunFam" id="1.25.40.20:FF:000375">
    <property type="entry name" value="ankyrin repeat domain-containing protein 42"/>
    <property type="match status" value="1"/>
</dbReference>
<dbReference type="Gene3D" id="1.25.40.20">
    <property type="entry name" value="Ankyrin repeat-containing domain"/>
    <property type="match status" value="3"/>
</dbReference>
<dbReference type="InterPro" id="IPR050776">
    <property type="entry name" value="Ank_Repeat/CDKN_Inhibitor"/>
</dbReference>
<dbReference type="InterPro" id="IPR002110">
    <property type="entry name" value="Ankyrin_rpt"/>
</dbReference>
<dbReference type="InterPro" id="IPR036770">
    <property type="entry name" value="Ankyrin_rpt-contain_sf"/>
</dbReference>
<dbReference type="InterPro" id="IPR018247">
    <property type="entry name" value="EF_Hand_1_Ca_BS"/>
</dbReference>
<dbReference type="PANTHER" id="PTHR24201">
    <property type="entry name" value="ANK_REP_REGION DOMAIN-CONTAINING PROTEIN"/>
    <property type="match status" value="1"/>
</dbReference>
<dbReference type="Pfam" id="PF12796">
    <property type="entry name" value="Ank_2"/>
    <property type="match status" value="3"/>
</dbReference>
<dbReference type="PRINTS" id="PR01415">
    <property type="entry name" value="ANKYRIN"/>
</dbReference>
<dbReference type="SMART" id="SM00248">
    <property type="entry name" value="ANK"/>
    <property type="match status" value="6"/>
</dbReference>
<dbReference type="SUPFAM" id="SSF48403">
    <property type="entry name" value="Ankyrin repeat"/>
    <property type="match status" value="1"/>
</dbReference>
<dbReference type="PROSITE" id="PS50297">
    <property type="entry name" value="ANK_REP_REGION"/>
    <property type="match status" value="1"/>
</dbReference>
<dbReference type="PROSITE" id="PS50088">
    <property type="entry name" value="ANK_REPEAT"/>
    <property type="match status" value="3"/>
</dbReference>
<gene>
    <name type="primary">ANKRD42</name>
</gene>
<reference key="1">
    <citation type="journal article" date="2004" name="Nat. Genet.">
        <title>Complete sequencing and characterization of 21,243 full-length human cDNAs.</title>
        <authorList>
            <person name="Ota T."/>
            <person name="Suzuki Y."/>
            <person name="Nishikawa T."/>
            <person name="Otsuki T."/>
            <person name="Sugiyama T."/>
            <person name="Irie R."/>
            <person name="Wakamatsu A."/>
            <person name="Hayashi K."/>
            <person name="Sato H."/>
            <person name="Nagai K."/>
            <person name="Kimura K."/>
            <person name="Makita H."/>
            <person name="Sekine M."/>
            <person name="Obayashi M."/>
            <person name="Nishi T."/>
            <person name="Shibahara T."/>
            <person name="Tanaka T."/>
            <person name="Ishii S."/>
            <person name="Yamamoto J."/>
            <person name="Saito K."/>
            <person name="Kawai Y."/>
            <person name="Isono Y."/>
            <person name="Nakamura Y."/>
            <person name="Nagahari K."/>
            <person name="Murakami K."/>
            <person name="Yasuda T."/>
            <person name="Iwayanagi T."/>
            <person name="Wagatsuma M."/>
            <person name="Shiratori A."/>
            <person name="Sudo H."/>
            <person name="Hosoiri T."/>
            <person name="Kaku Y."/>
            <person name="Kodaira H."/>
            <person name="Kondo H."/>
            <person name="Sugawara M."/>
            <person name="Takahashi M."/>
            <person name="Kanda K."/>
            <person name="Yokoi T."/>
            <person name="Furuya T."/>
            <person name="Kikkawa E."/>
            <person name="Omura Y."/>
            <person name="Abe K."/>
            <person name="Kamihara K."/>
            <person name="Katsuta N."/>
            <person name="Sato K."/>
            <person name="Tanikawa M."/>
            <person name="Yamazaki M."/>
            <person name="Ninomiya K."/>
            <person name="Ishibashi T."/>
            <person name="Yamashita H."/>
            <person name="Murakawa K."/>
            <person name="Fujimori K."/>
            <person name="Tanai H."/>
            <person name="Kimata M."/>
            <person name="Watanabe M."/>
            <person name="Hiraoka S."/>
            <person name="Chiba Y."/>
            <person name="Ishida S."/>
            <person name="Ono Y."/>
            <person name="Takiguchi S."/>
            <person name="Watanabe S."/>
            <person name="Yosida M."/>
            <person name="Hotuta T."/>
            <person name="Kusano J."/>
            <person name="Kanehori K."/>
            <person name="Takahashi-Fujii A."/>
            <person name="Hara H."/>
            <person name="Tanase T.-O."/>
            <person name="Nomura Y."/>
            <person name="Togiya S."/>
            <person name="Komai F."/>
            <person name="Hara R."/>
            <person name="Takeuchi K."/>
            <person name="Arita M."/>
            <person name="Imose N."/>
            <person name="Musashino K."/>
            <person name="Yuuki H."/>
            <person name="Oshima A."/>
            <person name="Sasaki N."/>
            <person name="Aotsuka S."/>
            <person name="Yoshikawa Y."/>
            <person name="Matsunawa H."/>
            <person name="Ichihara T."/>
            <person name="Shiohata N."/>
            <person name="Sano S."/>
            <person name="Moriya S."/>
            <person name="Momiyama H."/>
            <person name="Satoh N."/>
            <person name="Takami S."/>
            <person name="Terashima Y."/>
            <person name="Suzuki O."/>
            <person name="Nakagawa S."/>
            <person name="Senoh A."/>
            <person name="Mizoguchi H."/>
            <person name="Goto Y."/>
            <person name="Shimizu F."/>
            <person name="Wakebe H."/>
            <person name="Hishigaki H."/>
            <person name="Watanabe T."/>
            <person name="Sugiyama A."/>
            <person name="Takemoto M."/>
            <person name="Kawakami B."/>
            <person name="Yamazaki M."/>
            <person name="Watanabe K."/>
            <person name="Kumagai A."/>
            <person name="Itakura S."/>
            <person name="Fukuzumi Y."/>
            <person name="Fujimori Y."/>
            <person name="Komiyama M."/>
            <person name="Tashiro H."/>
            <person name="Tanigami A."/>
            <person name="Fujiwara T."/>
            <person name="Ono T."/>
            <person name="Yamada K."/>
            <person name="Fujii Y."/>
            <person name="Ozaki K."/>
            <person name="Hirao M."/>
            <person name="Ohmori Y."/>
            <person name="Kawabata A."/>
            <person name="Hikiji T."/>
            <person name="Kobatake N."/>
            <person name="Inagaki H."/>
            <person name="Ikema Y."/>
            <person name="Okamoto S."/>
            <person name="Okitani R."/>
            <person name="Kawakami T."/>
            <person name="Noguchi S."/>
            <person name="Itoh T."/>
            <person name="Shigeta K."/>
            <person name="Senba T."/>
            <person name="Matsumura K."/>
            <person name="Nakajima Y."/>
            <person name="Mizuno T."/>
            <person name="Morinaga M."/>
            <person name="Sasaki M."/>
            <person name="Togashi T."/>
            <person name="Oyama M."/>
            <person name="Hata H."/>
            <person name="Watanabe M."/>
            <person name="Komatsu T."/>
            <person name="Mizushima-Sugano J."/>
            <person name="Satoh T."/>
            <person name="Shirai Y."/>
            <person name="Takahashi Y."/>
            <person name="Nakagawa K."/>
            <person name="Okumura K."/>
            <person name="Nagase T."/>
            <person name="Nomura N."/>
            <person name="Kikuchi H."/>
            <person name="Masuho Y."/>
            <person name="Yamashita R."/>
            <person name="Nakai K."/>
            <person name="Yada T."/>
            <person name="Nakamura Y."/>
            <person name="Ohara O."/>
            <person name="Isogai T."/>
            <person name="Sugano S."/>
        </authorList>
    </citation>
    <scope>NUCLEOTIDE SEQUENCE [LARGE SCALE MRNA] (ISOFORM 1)</scope>
    <source>
        <tissue>Substantia nigra</tissue>
    </source>
</reference>
<reference key="2">
    <citation type="journal article" date="2004" name="Genome Res.">
        <title>The status, quality, and expansion of the NIH full-length cDNA project: the Mammalian Gene Collection (MGC).</title>
        <authorList>
            <consortium name="The MGC Project Team"/>
        </authorList>
    </citation>
    <scope>NUCLEOTIDE SEQUENCE [LARGE SCALE MRNA] (ISOFORM 2)</scope>
    <source>
        <tissue>Brain</tissue>
    </source>
</reference>
<feature type="chain" id="PRO_0000244371" description="Ankyrin repeat domain-containing protein 42">
    <location>
        <begin position="1"/>
        <end position="389"/>
    </location>
</feature>
<feature type="repeat" description="ANK 1">
    <location>
        <begin position="25"/>
        <end position="60"/>
    </location>
</feature>
<feature type="repeat" description="ANK 2">
    <location>
        <begin position="64"/>
        <end position="93"/>
    </location>
</feature>
<feature type="repeat" description="ANK 3">
    <location>
        <begin position="97"/>
        <end position="126"/>
    </location>
</feature>
<feature type="repeat" description="ANK 4">
    <location>
        <begin position="130"/>
        <end position="159"/>
    </location>
</feature>
<feature type="repeat" description="ANK 5">
    <location>
        <begin position="163"/>
        <end position="192"/>
    </location>
</feature>
<feature type="repeat" description="ANK 6">
    <location>
        <begin position="200"/>
        <end position="232"/>
    </location>
</feature>
<feature type="repeat" description="ANK 7">
    <location>
        <begin position="235"/>
        <end position="265"/>
    </location>
</feature>
<feature type="repeat" description="ANK 8">
    <location>
        <begin position="269"/>
        <end position="298"/>
    </location>
</feature>
<feature type="repeat" description="ANK 9">
    <location>
        <begin position="302"/>
        <end position="332"/>
    </location>
</feature>
<feature type="region of interest" description="Disordered" evidence="1">
    <location>
        <begin position="1"/>
        <end position="21"/>
    </location>
</feature>
<feature type="compositionally biased region" description="Polar residues" evidence="1">
    <location>
        <begin position="7"/>
        <end position="19"/>
    </location>
</feature>
<feature type="splice variant" id="VSP_019559" description="In isoform 2." evidence="2">
    <original>V</original>
    <variation>VVRGASINELDVLHKFTPLHWAAHSGSLE</variation>
    <location>
        <position position="46"/>
    </location>
</feature>
<feature type="splice variant" id="VSP_019560" description="In isoform 2." evidence="2">
    <original>VHL</original>
    <variation>EPP</variation>
    <location>
        <begin position="168"/>
        <end position="170"/>
    </location>
</feature>
<feature type="splice variant" id="VSP_019561" description="In isoform 2." evidence="2">
    <location>
        <begin position="171"/>
        <end position="389"/>
    </location>
</feature>
<feature type="sequence variant" id="VAR_028366" description="In dbSNP:rs17515016.">
    <original>N</original>
    <variation>D</variation>
    <location>
        <position position="198"/>
    </location>
</feature>
<feature type="sequence conflict" description="In Ref. 1; BAC04496." evidence="3" ref="1">
    <original>S</original>
    <variation>G</variation>
    <location>
        <position position="156"/>
    </location>
</feature>
<keyword id="KW-0025">Alternative splicing</keyword>
<keyword id="KW-0040">ANK repeat</keyword>
<keyword id="KW-1267">Proteomics identification</keyword>
<keyword id="KW-1185">Reference proteome</keyword>
<keyword id="KW-0677">Repeat</keyword>
<evidence type="ECO:0000256" key="1">
    <source>
        <dbReference type="SAM" id="MobiDB-lite"/>
    </source>
</evidence>
<evidence type="ECO:0000303" key="2">
    <source>
    </source>
</evidence>
<evidence type="ECO:0000305" key="3"/>
<protein>
    <recommendedName>
        <fullName>Ankyrin repeat domain-containing protein 42</fullName>
    </recommendedName>
</protein>
<comment type="alternative products">
    <event type="alternative splicing"/>
    <isoform>
        <id>Q8N9B4-1</id>
        <name>1</name>
        <sequence type="displayed"/>
    </isoform>
    <isoform>
        <id>Q8N9B4-2</id>
        <name>2</name>
        <sequence type="described" ref="VSP_019559 VSP_019560 VSP_019561"/>
    </isoform>
</comment>
<organism>
    <name type="scientific">Homo sapiens</name>
    <name type="common">Human</name>
    <dbReference type="NCBI Taxonomy" id="9606"/>
    <lineage>
        <taxon>Eukaryota</taxon>
        <taxon>Metazoa</taxon>
        <taxon>Chordata</taxon>
        <taxon>Craniata</taxon>
        <taxon>Vertebrata</taxon>
        <taxon>Euteleostomi</taxon>
        <taxon>Mammalia</taxon>
        <taxon>Eutheria</taxon>
        <taxon>Euarchontoglires</taxon>
        <taxon>Primates</taxon>
        <taxon>Haplorrhini</taxon>
        <taxon>Catarrhini</taxon>
        <taxon>Hominidae</taxon>
        <taxon>Homo</taxon>
    </lineage>
</organism>
<sequence>MPGVANSGPSTSSRETANPCSRKKVHFGSIHDAVRAGDVKQLSEIVCLHWLLWHGADITHVTTRGWTASHIAAIRGQDACVQALIMNGANLTAQDDRGCTPLHLAATHGHSFTLQIMLRSGVDPSVTDKREWRPVHYAAFHGRLGCLQLLVKWGCSIEDVDYNGNLPVHLAAMEGHLHCFKFLVSRMSSATQVLKAFNDNGENVLDLAQRFFKQNILQFIQGAEYEGKDLEDQETLAFPGHVAAFKGDLGMLKKLVEDGVININERADNGSTPMHKAAGQGHIECLQWLIKMGADSNITNKAGERPSDVAKRFAHLAAVKLLEELQKYDIDDENEIDENDVKYFIRHGVEGSTDAKDDLCLSDLDKTDARRPSKNCRASWSMNDYVEKN</sequence>
<accession>Q8N9B4</accession>
<accession>Q49A49</accession>
<name>ANR42_HUMAN</name>
<proteinExistence type="evidence at protein level"/>